<protein>
    <recommendedName>
        <fullName evidence="1">N-acetyl-D-glucosamine kinase</fullName>
        <ecNumber evidence="1">2.7.1.59</ecNumber>
    </recommendedName>
    <alternativeName>
        <fullName evidence="1">GlcNAc kinase</fullName>
    </alternativeName>
</protein>
<sequence length="303" mass="32793">MYYGFDVGGTKIEFGAFNEKLERVATERIPTQTENYSLLVDDIASLIAKYDAEFGVEGKVGLGIPGMEDAETGALLTSNVPAAKGQFLRKDLEAKIGRSVKIDNDANCFALSEAWDEELKDSPSVMGLILGTGFGGGLIFDGKAFSGYSHVAGELGHSRLPIDAWFHLGENAPLLECGCGNKGCIDNYLSGRGFELLYAHYYGEQKKAIDIIKAHAEGDANAVEHVDRFMELLAICFANLFTCFDPHVVALGGGLSNFELIYEELPKRLPKHLLSVGRVPRIIKAKHGDSGGVRGAAFLNIKD</sequence>
<name>NAGK_ALIF1</name>
<proteinExistence type="inferred from homology"/>
<accession>Q5E4Z3</accession>
<organism>
    <name type="scientific">Aliivibrio fischeri (strain ATCC 700601 / ES114)</name>
    <name type="common">Vibrio fischeri</name>
    <dbReference type="NCBI Taxonomy" id="312309"/>
    <lineage>
        <taxon>Bacteria</taxon>
        <taxon>Pseudomonadati</taxon>
        <taxon>Pseudomonadota</taxon>
        <taxon>Gammaproteobacteria</taxon>
        <taxon>Vibrionales</taxon>
        <taxon>Vibrionaceae</taxon>
        <taxon>Aliivibrio</taxon>
    </lineage>
</organism>
<gene>
    <name evidence="1" type="primary">nagK</name>
    <name type="ordered locus">VF_1408</name>
</gene>
<reference key="1">
    <citation type="journal article" date="2005" name="Proc. Natl. Acad. Sci. U.S.A.">
        <title>Complete genome sequence of Vibrio fischeri: a symbiotic bacterium with pathogenic congeners.</title>
        <authorList>
            <person name="Ruby E.G."/>
            <person name="Urbanowski M."/>
            <person name="Campbell J."/>
            <person name="Dunn A."/>
            <person name="Faini M."/>
            <person name="Gunsalus R."/>
            <person name="Lostroh P."/>
            <person name="Lupp C."/>
            <person name="McCann J."/>
            <person name="Millikan D."/>
            <person name="Schaefer A."/>
            <person name="Stabb E."/>
            <person name="Stevens A."/>
            <person name="Visick K."/>
            <person name="Whistler C."/>
            <person name="Greenberg E.P."/>
        </authorList>
    </citation>
    <scope>NUCLEOTIDE SEQUENCE [LARGE SCALE GENOMIC DNA]</scope>
    <source>
        <strain>ATCC 700601 / ES114</strain>
    </source>
</reference>
<keyword id="KW-0067">ATP-binding</keyword>
<keyword id="KW-0119">Carbohydrate metabolism</keyword>
<keyword id="KW-0418">Kinase</keyword>
<keyword id="KW-0479">Metal-binding</keyword>
<keyword id="KW-0547">Nucleotide-binding</keyword>
<keyword id="KW-1185">Reference proteome</keyword>
<keyword id="KW-0808">Transferase</keyword>
<keyword id="KW-0862">Zinc</keyword>
<dbReference type="EC" id="2.7.1.59" evidence="1"/>
<dbReference type="EMBL" id="CP000020">
    <property type="protein sequence ID" value="AAW85903.1"/>
    <property type="molecule type" value="Genomic_DNA"/>
</dbReference>
<dbReference type="RefSeq" id="WP_011262000.1">
    <property type="nucleotide sequence ID" value="NC_006840.2"/>
</dbReference>
<dbReference type="RefSeq" id="YP_204791.1">
    <property type="nucleotide sequence ID" value="NC_006840.2"/>
</dbReference>
<dbReference type="SMR" id="Q5E4Z3"/>
<dbReference type="STRING" id="312309.VF_1408"/>
<dbReference type="EnsemblBacteria" id="AAW85903">
    <property type="protein sequence ID" value="AAW85903"/>
    <property type="gene ID" value="VF_1408"/>
</dbReference>
<dbReference type="GeneID" id="54164080"/>
<dbReference type="KEGG" id="vfi:VF_1408"/>
<dbReference type="PATRIC" id="fig|312309.11.peg.1420"/>
<dbReference type="eggNOG" id="COG1940">
    <property type="taxonomic scope" value="Bacteria"/>
</dbReference>
<dbReference type="HOGENOM" id="CLU_036604_0_3_6"/>
<dbReference type="OrthoDB" id="9810372at2"/>
<dbReference type="UniPathway" id="UPA00544"/>
<dbReference type="Proteomes" id="UP000000537">
    <property type="component" value="Chromosome I"/>
</dbReference>
<dbReference type="GO" id="GO:0005524">
    <property type="term" value="F:ATP binding"/>
    <property type="evidence" value="ECO:0007669"/>
    <property type="project" value="UniProtKB-UniRule"/>
</dbReference>
<dbReference type="GO" id="GO:0045127">
    <property type="term" value="F:N-acetylglucosamine kinase activity"/>
    <property type="evidence" value="ECO:0007669"/>
    <property type="project" value="UniProtKB-UniRule"/>
</dbReference>
<dbReference type="GO" id="GO:0008270">
    <property type="term" value="F:zinc ion binding"/>
    <property type="evidence" value="ECO:0007669"/>
    <property type="project" value="UniProtKB-UniRule"/>
</dbReference>
<dbReference type="GO" id="GO:0006044">
    <property type="term" value="P:N-acetylglucosamine metabolic process"/>
    <property type="evidence" value="ECO:0007669"/>
    <property type="project" value="UniProtKB-UniRule"/>
</dbReference>
<dbReference type="GO" id="GO:0009254">
    <property type="term" value="P:peptidoglycan turnover"/>
    <property type="evidence" value="ECO:0007669"/>
    <property type="project" value="UniProtKB-UniRule"/>
</dbReference>
<dbReference type="CDD" id="cd24057">
    <property type="entry name" value="ASKHA_NBD_ROK_NAGK"/>
    <property type="match status" value="1"/>
</dbReference>
<dbReference type="FunFam" id="3.30.420.40:FF:000049">
    <property type="entry name" value="N-acetyl-D-glucosamine kinase"/>
    <property type="match status" value="1"/>
</dbReference>
<dbReference type="FunFam" id="3.30.420.40:FF:000051">
    <property type="entry name" value="N-acetyl-D-glucosamine kinase"/>
    <property type="match status" value="1"/>
</dbReference>
<dbReference type="Gene3D" id="3.30.420.40">
    <property type="match status" value="2"/>
</dbReference>
<dbReference type="HAMAP" id="MF_01271">
    <property type="entry name" value="GlcNAc_kinase"/>
    <property type="match status" value="1"/>
</dbReference>
<dbReference type="InterPro" id="IPR043129">
    <property type="entry name" value="ATPase_NBD"/>
</dbReference>
<dbReference type="InterPro" id="IPR023505">
    <property type="entry name" value="N-acetyl-D-glucosamine_kinase"/>
</dbReference>
<dbReference type="InterPro" id="IPR000600">
    <property type="entry name" value="ROK"/>
</dbReference>
<dbReference type="InterPro" id="IPR049874">
    <property type="entry name" value="ROK_cs"/>
</dbReference>
<dbReference type="NCBIfam" id="NF009835">
    <property type="entry name" value="PRK13310.1"/>
    <property type="match status" value="1"/>
</dbReference>
<dbReference type="PANTHER" id="PTHR18964:SF162">
    <property type="entry name" value="N-ACETYL-D-GLUCOSAMINE KINASE"/>
    <property type="match status" value="1"/>
</dbReference>
<dbReference type="PANTHER" id="PTHR18964">
    <property type="entry name" value="ROK (REPRESSOR, ORF, KINASE) FAMILY"/>
    <property type="match status" value="1"/>
</dbReference>
<dbReference type="Pfam" id="PF00480">
    <property type="entry name" value="ROK"/>
    <property type="match status" value="1"/>
</dbReference>
<dbReference type="SUPFAM" id="SSF53067">
    <property type="entry name" value="Actin-like ATPase domain"/>
    <property type="match status" value="1"/>
</dbReference>
<dbReference type="PROSITE" id="PS01125">
    <property type="entry name" value="ROK"/>
    <property type="match status" value="1"/>
</dbReference>
<feature type="chain" id="PRO_0000270120" description="N-acetyl-D-glucosamine kinase">
    <location>
        <begin position="1"/>
        <end position="303"/>
    </location>
</feature>
<feature type="binding site" evidence="1">
    <location>
        <begin position="4"/>
        <end position="11"/>
    </location>
    <ligand>
        <name>ATP</name>
        <dbReference type="ChEBI" id="CHEBI:30616"/>
    </ligand>
</feature>
<feature type="binding site" evidence="1">
    <location>
        <begin position="133"/>
        <end position="140"/>
    </location>
    <ligand>
        <name>ATP</name>
        <dbReference type="ChEBI" id="CHEBI:30616"/>
    </ligand>
</feature>
<feature type="binding site" evidence="1">
    <location>
        <position position="157"/>
    </location>
    <ligand>
        <name>Zn(2+)</name>
        <dbReference type="ChEBI" id="CHEBI:29105"/>
    </ligand>
</feature>
<feature type="binding site" evidence="1">
    <location>
        <position position="177"/>
    </location>
    <ligand>
        <name>Zn(2+)</name>
        <dbReference type="ChEBI" id="CHEBI:29105"/>
    </ligand>
</feature>
<feature type="binding site" evidence="1">
    <location>
        <position position="179"/>
    </location>
    <ligand>
        <name>Zn(2+)</name>
        <dbReference type="ChEBI" id="CHEBI:29105"/>
    </ligand>
</feature>
<feature type="binding site" evidence="1">
    <location>
        <position position="184"/>
    </location>
    <ligand>
        <name>Zn(2+)</name>
        <dbReference type="ChEBI" id="CHEBI:29105"/>
    </ligand>
</feature>
<evidence type="ECO:0000255" key="1">
    <source>
        <dbReference type="HAMAP-Rule" id="MF_01271"/>
    </source>
</evidence>
<comment type="function">
    <text evidence="1">Catalyzes the phosphorylation of N-acetyl-D-glucosamine (GlcNAc) derived from cell-wall degradation, yielding GlcNAc-6-P.</text>
</comment>
<comment type="catalytic activity">
    <reaction evidence="1">
        <text>N-acetyl-D-glucosamine + ATP = N-acetyl-D-glucosamine 6-phosphate + ADP + H(+)</text>
        <dbReference type="Rhea" id="RHEA:17417"/>
        <dbReference type="ChEBI" id="CHEBI:15378"/>
        <dbReference type="ChEBI" id="CHEBI:30616"/>
        <dbReference type="ChEBI" id="CHEBI:57513"/>
        <dbReference type="ChEBI" id="CHEBI:456216"/>
        <dbReference type="ChEBI" id="CHEBI:506227"/>
        <dbReference type="EC" id="2.7.1.59"/>
    </reaction>
</comment>
<comment type="pathway">
    <text evidence="1">Cell wall biogenesis; peptidoglycan recycling.</text>
</comment>
<comment type="similarity">
    <text evidence="1">Belongs to the ROK (NagC/XylR) family. NagK subfamily.</text>
</comment>